<accession>Q7N8B9</accession>
<comment type="function">
    <text evidence="1">Part of the ABC transporter complex FbpABC involved in Fe(3+) ions import. Responsible for energy coupling to the transport system.</text>
</comment>
<comment type="catalytic activity">
    <reaction evidence="1">
        <text>Fe(3+)(out) + ATP + H2O = Fe(3+)(in) + ADP + phosphate + H(+)</text>
        <dbReference type="Rhea" id="RHEA:12332"/>
        <dbReference type="ChEBI" id="CHEBI:15377"/>
        <dbReference type="ChEBI" id="CHEBI:15378"/>
        <dbReference type="ChEBI" id="CHEBI:29034"/>
        <dbReference type="ChEBI" id="CHEBI:30616"/>
        <dbReference type="ChEBI" id="CHEBI:43474"/>
        <dbReference type="ChEBI" id="CHEBI:456216"/>
        <dbReference type="EC" id="7.2.2.7"/>
    </reaction>
</comment>
<comment type="subunit">
    <text evidence="1">The complex is composed of two ATP-binding proteins (FbpC), two transmembrane proteins (FbpB) and a solute-binding protein (FbpA).</text>
</comment>
<comment type="subcellular location">
    <subcellularLocation>
        <location evidence="1">Cell inner membrane</location>
        <topology evidence="1">Peripheral membrane protein</topology>
    </subcellularLocation>
</comment>
<comment type="similarity">
    <text evidence="1">Belongs to the ABC transporter superfamily. Fe(3+) ion importer (TC 3.A.1.10) family.</text>
</comment>
<evidence type="ECO:0000255" key="1">
    <source>
        <dbReference type="HAMAP-Rule" id="MF_01706"/>
    </source>
</evidence>
<reference key="1">
    <citation type="journal article" date="2003" name="Nat. Biotechnol.">
        <title>The genome sequence of the entomopathogenic bacterium Photorhabdus luminescens.</title>
        <authorList>
            <person name="Duchaud E."/>
            <person name="Rusniok C."/>
            <person name="Frangeul L."/>
            <person name="Buchrieser C."/>
            <person name="Givaudan A."/>
            <person name="Taourit S."/>
            <person name="Bocs S."/>
            <person name="Boursaux-Eude C."/>
            <person name="Chandler M."/>
            <person name="Charles J.-F."/>
            <person name="Dassa E."/>
            <person name="Derose R."/>
            <person name="Derzelle S."/>
            <person name="Freyssinet G."/>
            <person name="Gaudriault S."/>
            <person name="Medigue C."/>
            <person name="Lanois A."/>
            <person name="Powell K."/>
            <person name="Siguier P."/>
            <person name="Vincent R."/>
            <person name="Wingate V."/>
            <person name="Zouine M."/>
            <person name="Glaser P."/>
            <person name="Boemare N."/>
            <person name="Danchin A."/>
            <person name="Kunst F."/>
        </authorList>
    </citation>
    <scope>NUCLEOTIDE SEQUENCE [LARGE SCALE GENOMIC DNA]</scope>
    <source>
        <strain>DSM 15139 / CIP 105565 / TT01</strain>
    </source>
</reference>
<dbReference type="EC" id="7.2.2.7" evidence="1"/>
<dbReference type="EMBL" id="BX571861">
    <property type="protein sequence ID" value="CAE13105.1"/>
    <property type="molecule type" value="Genomic_DNA"/>
</dbReference>
<dbReference type="RefSeq" id="WP_011145184.1">
    <property type="nucleotide sequence ID" value="NC_005126.1"/>
</dbReference>
<dbReference type="SMR" id="Q7N8B9"/>
<dbReference type="STRING" id="243265.plu0810"/>
<dbReference type="GeneID" id="48847101"/>
<dbReference type="KEGG" id="plu:plu0810"/>
<dbReference type="eggNOG" id="COG3842">
    <property type="taxonomic scope" value="Bacteria"/>
</dbReference>
<dbReference type="HOGENOM" id="CLU_000604_1_1_6"/>
<dbReference type="OrthoDB" id="9802264at2"/>
<dbReference type="Proteomes" id="UP000002514">
    <property type="component" value="Chromosome"/>
</dbReference>
<dbReference type="GO" id="GO:0043190">
    <property type="term" value="C:ATP-binding cassette (ABC) transporter complex"/>
    <property type="evidence" value="ECO:0007669"/>
    <property type="project" value="InterPro"/>
</dbReference>
<dbReference type="GO" id="GO:0015408">
    <property type="term" value="F:ABC-type ferric iron transporter activity"/>
    <property type="evidence" value="ECO:0007669"/>
    <property type="project" value="UniProtKB-EC"/>
</dbReference>
<dbReference type="GO" id="GO:0005524">
    <property type="term" value="F:ATP binding"/>
    <property type="evidence" value="ECO:0007669"/>
    <property type="project" value="UniProtKB-KW"/>
</dbReference>
<dbReference type="GO" id="GO:0016887">
    <property type="term" value="F:ATP hydrolysis activity"/>
    <property type="evidence" value="ECO:0007669"/>
    <property type="project" value="InterPro"/>
</dbReference>
<dbReference type="CDD" id="cd03259">
    <property type="entry name" value="ABC_Carb_Solutes_like"/>
    <property type="match status" value="1"/>
</dbReference>
<dbReference type="FunFam" id="3.40.50.300:FF:002767">
    <property type="entry name" value="Fe(3+) ions import ATP-binding protein FbpC"/>
    <property type="match status" value="1"/>
</dbReference>
<dbReference type="Gene3D" id="2.40.50.100">
    <property type="match status" value="1"/>
</dbReference>
<dbReference type="Gene3D" id="3.40.50.300">
    <property type="entry name" value="P-loop containing nucleotide triphosphate hydrolases"/>
    <property type="match status" value="1"/>
</dbReference>
<dbReference type="InterPro" id="IPR003593">
    <property type="entry name" value="AAA+_ATPase"/>
</dbReference>
<dbReference type="InterPro" id="IPR050093">
    <property type="entry name" value="ABC_SmlMolc_Importer"/>
</dbReference>
<dbReference type="InterPro" id="IPR003439">
    <property type="entry name" value="ABC_transporter-like_ATP-bd"/>
</dbReference>
<dbReference type="InterPro" id="IPR017871">
    <property type="entry name" value="ABC_transporter-like_CS"/>
</dbReference>
<dbReference type="InterPro" id="IPR015853">
    <property type="entry name" value="ABC_transpr_FbpC"/>
</dbReference>
<dbReference type="InterPro" id="IPR008995">
    <property type="entry name" value="Mo/tungstate-bd_C_term_dom"/>
</dbReference>
<dbReference type="InterPro" id="IPR027417">
    <property type="entry name" value="P-loop_NTPase"/>
</dbReference>
<dbReference type="InterPro" id="IPR013611">
    <property type="entry name" value="Transp-assoc_OB_typ2"/>
</dbReference>
<dbReference type="NCBIfam" id="NF008513">
    <property type="entry name" value="PRK11432.1"/>
    <property type="match status" value="1"/>
</dbReference>
<dbReference type="PANTHER" id="PTHR42781">
    <property type="entry name" value="SPERMIDINE/PUTRESCINE IMPORT ATP-BINDING PROTEIN POTA"/>
    <property type="match status" value="1"/>
</dbReference>
<dbReference type="PANTHER" id="PTHR42781:SF4">
    <property type="entry name" value="SPERMIDINE_PUTRESCINE IMPORT ATP-BINDING PROTEIN POTA"/>
    <property type="match status" value="1"/>
</dbReference>
<dbReference type="Pfam" id="PF00005">
    <property type="entry name" value="ABC_tran"/>
    <property type="match status" value="1"/>
</dbReference>
<dbReference type="Pfam" id="PF08402">
    <property type="entry name" value="TOBE_2"/>
    <property type="match status" value="1"/>
</dbReference>
<dbReference type="SMART" id="SM00382">
    <property type="entry name" value="AAA"/>
    <property type="match status" value="1"/>
</dbReference>
<dbReference type="SUPFAM" id="SSF50331">
    <property type="entry name" value="MOP-like"/>
    <property type="match status" value="1"/>
</dbReference>
<dbReference type="SUPFAM" id="SSF52540">
    <property type="entry name" value="P-loop containing nucleoside triphosphate hydrolases"/>
    <property type="match status" value="1"/>
</dbReference>
<dbReference type="PROSITE" id="PS00211">
    <property type="entry name" value="ABC_TRANSPORTER_1"/>
    <property type="match status" value="1"/>
</dbReference>
<dbReference type="PROSITE" id="PS50893">
    <property type="entry name" value="ABC_TRANSPORTER_2"/>
    <property type="match status" value="1"/>
</dbReference>
<dbReference type="PROSITE" id="PS51242">
    <property type="entry name" value="FBPC"/>
    <property type="match status" value="1"/>
</dbReference>
<name>FBPC_PHOLL</name>
<protein>
    <recommendedName>
        <fullName evidence="1">Fe(3+) ions import ATP-binding protein FbpC</fullName>
        <ecNumber evidence="1">7.2.2.7</ecNumber>
    </recommendedName>
</protein>
<keyword id="KW-0067">ATP-binding</keyword>
<keyword id="KW-0997">Cell inner membrane</keyword>
<keyword id="KW-1003">Cell membrane</keyword>
<keyword id="KW-0406">Ion transport</keyword>
<keyword id="KW-0408">Iron</keyword>
<keyword id="KW-0410">Iron transport</keyword>
<keyword id="KW-0472">Membrane</keyword>
<keyword id="KW-0547">Nucleotide-binding</keyword>
<keyword id="KW-1185">Reference proteome</keyword>
<keyword id="KW-1278">Translocase</keyword>
<keyword id="KW-0813">Transport</keyword>
<feature type="chain" id="PRO_0000092358" description="Fe(3+) ions import ATP-binding protein FbpC">
    <location>
        <begin position="1"/>
        <end position="351"/>
    </location>
</feature>
<feature type="domain" description="ABC transporter" evidence="1">
    <location>
        <begin position="7"/>
        <end position="237"/>
    </location>
</feature>
<feature type="binding site" evidence="1">
    <location>
        <begin position="39"/>
        <end position="46"/>
    </location>
    <ligand>
        <name>ATP</name>
        <dbReference type="ChEBI" id="CHEBI:30616"/>
    </ligand>
</feature>
<gene>
    <name evidence="1" type="primary">fbpC</name>
    <name type="synonym">afuC</name>
    <name type="ordered locus">plu0810</name>
</gene>
<organism>
    <name type="scientific">Photorhabdus laumondii subsp. laumondii (strain DSM 15139 / CIP 105565 / TT01)</name>
    <name type="common">Photorhabdus luminescens subsp. laumondii</name>
    <dbReference type="NCBI Taxonomy" id="243265"/>
    <lineage>
        <taxon>Bacteria</taxon>
        <taxon>Pseudomonadati</taxon>
        <taxon>Pseudomonadota</taxon>
        <taxon>Gammaproteobacteria</taxon>
        <taxon>Enterobacterales</taxon>
        <taxon>Morganellaceae</taxon>
        <taxon>Photorhabdus</taxon>
    </lineage>
</organism>
<proteinExistence type="inferred from homology"/>
<sequence>MTQQNFVELKNVTKRFGNNTVIDNLELSIPQGHMVTLLGPSGCGKTTVLRLVAGLEKPSAGKIFIDGEDVTDRSIQQRDICMVFQSYALFPHMSLGENIGYGLKMLGQPKAEIRERVKEALELVDLGGFEDRYVDQISGGQQQRVALARALILKPKVLLFDEPLSNLDANLRRSMREKIRELQQQFNITSLYVTHDQSEAFAVSDAVLVMNKGKIMQIGTPQTLYRQPASEFMASFMGDANIFPATLATDYVEIFQYRLPRPANFTTNRQSVTVGVRPEAITLSRNGNISQRCTISHVAYMGPQYEVTVDWQGQTLLLQINATQLQPDVGDNYYLEIHPFGMFILTEKNSG</sequence>